<feature type="chain" id="PRO_0000422373" description="Fermitin family homolog 2">
    <location>
        <begin position="1"/>
        <end position="684"/>
    </location>
</feature>
<feature type="domain" description="FERM">
    <location>
        <begin position="279"/>
        <end position="577"/>
    </location>
</feature>
<feature type="domain" description="PH" evidence="2">
    <location>
        <begin position="378"/>
        <end position="474"/>
    </location>
</feature>
<feature type="region of interest" description="Interaction with membranes containing phosphatidylinositol phosphate" evidence="1">
    <location>
        <begin position="40"/>
        <end position="81"/>
    </location>
</feature>
<feature type="region of interest" description="Disordered" evidence="3">
    <location>
        <begin position="141"/>
        <end position="163"/>
    </location>
</feature>
<feature type="binding site" evidence="1">
    <location>
        <position position="381"/>
    </location>
    <ligand>
        <name>a 1,2-diacyl-sn-glycero-3-phospho-(1D-myo-inositol-3,4,5-trisphosphate)</name>
        <dbReference type="ChEBI" id="CHEBI:57836"/>
    </ligand>
</feature>
<feature type="sequence conflict" description="In Ref. 2; AAH91937." evidence="6" ref="2">
    <original>Y</original>
    <variation>G</variation>
    <location>
        <position position="82"/>
    </location>
</feature>
<gene>
    <name type="primary">fermt2</name>
</gene>
<sequence length="684" mass="78476">MALDGIRMPDGCYADGTWELKMHVTDLNRDVSLRVTGEIHIGGVMLKLVEKLDVKKDWSDHALWWEKKKTWLLKTHWTLDKYGIQADARLLFTPQHKLLRLQLPNMKHMRVKVNFSDRVFKAVSDICKTFNIRHPEELSLLRKPRDPKKKKKKLEDAEEETLELEGPLLTPGSGSIYSSPGLYSKTMTPTYDSRDGSPLSPTSAWFGDSPLSEGNPSILAVSQPITSPDILVKMYKPQSLLDKAKINQGWLDSSRSLMEQDVKENEVLLLRFKYHSFFDLNPKYDAIRVNQLYEQAKWAILLEEIECTEEEMMMFAALQYHINKLSIMSSDNHMNNSEKEVDEVDAALSDLEITLEGGKTSNTLGDITSIPELADYVKVFKPKKLTLKGYKQYWCTFKDITISCYKSREEAHGTPAHQMNLRGCEVTPDVNISGQKFNIKLLIPVADGMNEIWLRCDTEKQYAQWMAACRLASKGKTMADSSYNLEVQNILSFLKMQHMNPDPQIIEPITTDINPECLVSPRYLKKYKNKQPGFVRDLISARILEAHQNVAQMSLIEAKMRFIQAWQSLPEFGITHFLAKFQGGKKDELIGITYNRLIRMDAGTGDAIKTWRFSNMKQWNVNWEIKMVTVEFADEPSLAFICAEVDCKVVHEFIGGYIFLSTRAKDQNESLDEEMFYKLTSGWV</sequence>
<evidence type="ECO:0000250" key="1"/>
<evidence type="ECO:0000255" key="2">
    <source>
        <dbReference type="PROSITE-ProRule" id="PRU00145"/>
    </source>
</evidence>
<evidence type="ECO:0000256" key="3">
    <source>
        <dbReference type="SAM" id="MobiDB-lite"/>
    </source>
</evidence>
<evidence type="ECO:0000269" key="4">
    <source>
    </source>
</evidence>
<evidence type="ECO:0000269" key="5">
    <source>
    </source>
</evidence>
<evidence type="ECO:0000305" key="6"/>
<name>FERM2_DANRE</name>
<accession>F1Q8X5</accession>
<accession>Q58EF4</accession>
<organism>
    <name type="scientific">Danio rerio</name>
    <name type="common">Zebrafish</name>
    <name type="synonym">Brachydanio rerio</name>
    <dbReference type="NCBI Taxonomy" id="7955"/>
    <lineage>
        <taxon>Eukaryota</taxon>
        <taxon>Metazoa</taxon>
        <taxon>Chordata</taxon>
        <taxon>Craniata</taxon>
        <taxon>Vertebrata</taxon>
        <taxon>Euteleostomi</taxon>
        <taxon>Actinopterygii</taxon>
        <taxon>Neopterygii</taxon>
        <taxon>Teleostei</taxon>
        <taxon>Ostariophysi</taxon>
        <taxon>Cypriniformes</taxon>
        <taxon>Danionidae</taxon>
        <taxon>Danioninae</taxon>
        <taxon>Danio</taxon>
    </lineage>
</organism>
<protein>
    <recommendedName>
        <fullName>Fermitin family homolog 2</fullName>
    </recommendedName>
    <alternativeName>
        <fullName>Kindlin-2</fullName>
    </alternativeName>
</protein>
<dbReference type="EMBL" id="AL928709">
    <property type="status" value="NOT_ANNOTATED_CDS"/>
    <property type="molecule type" value="Genomic_DNA"/>
</dbReference>
<dbReference type="EMBL" id="BC091937">
    <property type="protein sequence ID" value="AAH91937.1"/>
    <property type="molecule type" value="mRNA"/>
</dbReference>
<dbReference type="RefSeq" id="NP_001243144.1">
    <property type="nucleotide sequence ID" value="NM_001256215.1"/>
</dbReference>
<dbReference type="SMR" id="F1Q8X5"/>
<dbReference type="FunCoup" id="F1Q8X5">
    <property type="interactions" value="2433"/>
</dbReference>
<dbReference type="STRING" id="7955.ENSDARP00000049463"/>
<dbReference type="PaxDb" id="7955-ENSDARP00000080431"/>
<dbReference type="Ensembl" id="ENSDART00000049464">
    <property type="protein sequence ID" value="ENSDARP00000049463"/>
    <property type="gene ID" value="ENSDARG00000020242"/>
</dbReference>
<dbReference type="GeneID" id="553051"/>
<dbReference type="KEGG" id="dre:553051"/>
<dbReference type="AGR" id="ZFIN:ZDB-GENE-050506-132"/>
<dbReference type="CTD" id="10979"/>
<dbReference type="ZFIN" id="ZDB-GENE-050506-132">
    <property type="gene designation" value="fermt2"/>
</dbReference>
<dbReference type="eggNOG" id="KOG3727">
    <property type="taxonomic scope" value="Eukaryota"/>
</dbReference>
<dbReference type="HOGENOM" id="CLU_011611_1_0_1"/>
<dbReference type="InParanoid" id="F1Q8X5"/>
<dbReference type="OrthoDB" id="10057618at2759"/>
<dbReference type="PhylomeDB" id="F1Q8X5"/>
<dbReference type="TreeFam" id="TF314677"/>
<dbReference type="Reactome" id="R-DRE-446353">
    <property type="pathway name" value="Cell-extracellular matrix interactions"/>
</dbReference>
<dbReference type="PRO" id="PR:F1Q8X5"/>
<dbReference type="Proteomes" id="UP000000437">
    <property type="component" value="Chromosome 17"/>
</dbReference>
<dbReference type="Bgee" id="ENSDARG00000020242">
    <property type="expression patterns" value="Expressed in muscle tissue and 25 other cell types or tissues"/>
</dbReference>
<dbReference type="ExpressionAtlas" id="F1Q8X5">
    <property type="expression patterns" value="baseline and differential"/>
</dbReference>
<dbReference type="GO" id="GO:0005938">
    <property type="term" value="C:cell cortex"/>
    <property type="evidence" value="ECO:0007669"/>
    <property type="project" value="UniProtKB-SubCell"/>
</dbReference>
<dbReference type="GO" id="GO:0009986">
    <property type="term" value="C:cell surface"/>
    <property type="evidence" value="ECO:0007669"/>
    <property type="project" value="UniProtKB-SubCell"/>
</dbReference>
<dbReference type="GO" id="GO:0005925">
    <property type="term" value="C:focal adhesion"/>
    <property type="evidence" value="ECO:0000318"/>
    <property type="project" value="GO_Central"/>
</dbReference>
<dbReference type="GO" id="GO:0031674">
    <property type="term" value="C:I band"/>
    <property type="evidence" value="ECO:0007669"/>
    <property type="project" value="UniProtKB-SubCell"/>
</dbReference>
<dbReference type="GO" id="GO:0014704">
    <property type="term" value="C:intercalated disc"/>
    <property type="evidence" value="ECO:0000315"/>
    <property type="project" value="ZFIN"/>
</dbReference>
<dbReference type="GO" id="GO:0031258">
    <property type="term" value="C:lamellipodium membrane"/>
    <property type="evidence" value="ECO:0007669"/>
    <property type="project" value="UniProtKB-SubCell"/>
</dbReference>
<dbReference type="GO" id="GO:0005634">
    <property type="term" value="C:nucleus"/>
    <property type="evidence" value="ECO:0007669"/>
    <property type="project" value="UniProtKB-SubCell"/>
</dbReference>
<dbReference type="GO" id="GO:0001725">
    <property type="term" value="C:stress fiber"/>
    <property type="evidence" value="ECO:0007669"/>
    <property type="project" value="UniProtKB-SubCell"/>
</dbReference>
<dbReference type="GO" id="GO:0005178">
    <property type="term" value="F:integrin binding"/>
    <property type="evidence" value="ECO:0000318"/>
    <property type="project" value="GO_Central"/>
</dbReference>
<dbReference type="GO" id="GO:0008289">
    <property type="term" value="F:lipid binding"/>
    <property type="evidence" value="ECO:0007669"/>
    <property type="project" value="UniProtKB-KW"/>
</dbReference>
<dbReference type="GO" id="GO:0001525">
    <property type="term" value="P:angiogenesis"/>
    <property type="evidence" value="ECO:0000315"/>
    <property type="project" value="ZFIN"/>
</dbReference>
<dbReference type="GO" id="GO:0055008">
    <property type="term" value="P:cardiac muscle tissue morphogenesis"/>
    <property type="evidence" value="ECO:0000315"/>
    <property type="project" value="ZFIN"/>
</dbReference>
<dbReference type="GO" id="GO:0016477">
    <property type="term" value="P:cell migration"/>
    <property type="evidence" value="ECO:0000316"/>
    <property type="project" value="ZFIN"/>
</dbReference>
<dbReference type="GO" id="GO:0007160">
    <property type="term" value="P:cell-matrix adhesion"/>
    <property type="evidence" value="ECO:0000318"/>
    <property type="project" value="GO_Central"/>
</dbReference>
<dbReference type="GO" id="GO:0007010">
    <property type="term" value="P:cytoskeleton organization"/>
    <property type="evidence" value="ECO:0000315"/>
    <property type="project" value="ZFIN"/>
</dbReference>
<dbReference type="GO" id="GO:0007229">
    <property type="term" value="P:integrin-mediated signaling pathway"/>
    <property type="evidence" value="ECO:0007669"/>
    <property type="project" value="InterPro"/>
</dbReference>
<dbReference type="GO" id="GO:0008360">
    <property type="term" value="P:regulation of cell shape"/>
    <property type="evidence" value="ECO:0007669"/>
    <property type="project" value="UniProtKB-KW"/>
</dbReference>
<dbReference type="GO" id="GO:0016055">
    <property type="term" value="P:Wnt signaling pathway"/>
    <property type="evidence" value="ECO:0007669"/>
    <property type="project" value="UniProtKB-KW"/>
</dbReference>
<dbReference type="CDD" id="cd17181">
    <property type="entry name" value="FERM_F0_KIND2"/>
    <property type="match status" value="1"/>
</dbReference>
<dbReference type="CDD" id="cd17184">
    <property type="entry name" value="FERM_F1_KIND2"/>
    <property type="match status" value="1"/>
</dbReference>
<dbReference type="CDD" id="cd01237">
    <property type="entry name" value="PH_fermitin"/>
    <property type="match status" value="1"/>
</dbReference>
<dbReference type="FunFam" id="2.30.29.30:FF:000037">
    <property type="entry name" value="Fermitin family homolog 2"/>
    <property type="match status" value="1"/>
</dbReference>
<dbReference type="FunFam" id="2.30.29.30:FF:000057">
    <property type="entry name" value="Fermitin family homolog 2 (Drosophila)"/>
    <property type="match status" value="1"/>
</dbReference>
<dbReference type="FunFam" id="3.10.20.90:FF:000035">
    <property type="entry name" value="Fermitin family homolog 2 (Drosophila)"/>
    <property type="match status" value="1"/>
</dbReference>
<dbReference type="Gene3D" id="3.10.20.90">
    <property type="entry name" value="Phosphatidylinositol 3-kinase Catalytic Subunit, Chain A, domain 1"/>
    <property type="match status" value="2"/>
</dbReference>
<dbReference type="Gene3D" id="2.30.29.30">
    <property type="entry name" value="Pleckstrin-homology domain (PH domain)/Phosphotyrosine-binding domain (PTB)"/>
    <property type="match status" value="2"/>
</dbReference>
<dbReference type="InterPro" id="IPR019749">
    <property type="entry name" value="Band_41_domain"/>
</dbReference>
<dbReference type="InterPro" id="IPR035963">
    <property type="entry name" value="FERM_2"/>
</dbReference>
<dbReference type="InterPro" id="IPR019748">
    <property type="entry name" value="FERM_central"/>
</dbReference>
<dbReference type="InterPro" id="IPR037843">
    <property type="entry name" value="Kindlin/fermitin"/>
</dbReference>
<dbReference type="InterPro" id="IPR040790">
    <property type="entry name" value="Kindlin_2_N"/>
</dbReference>
<dbReference type="InterPro" id="IPR011993">
    <property type="entry name" value="PH-like_dom_sf"/>
</dbReference>
<dbReference type="InterPro" id="IPR001849">
    <property type="entry name" value="PH_domain"/>
</dbReference>
<dbReference type="InterPro" id="IPR037837">
    <property type="entry name" value="PH_Kindlin/fermitin"/>
</dbReference>
<dbReference type="PANTHER" id="PTHR16160">
    <property type="entry name" value="FERMITIN 2-RELATED"/>
    <property type="match status" value="1"/>
</dbReference>
<dbReference type="PANTHER" id="PTHR16160:SF11">
    <property type="entry name" value="FERMITIN FAMILY HOMOLOG 2"/>
    <property type="match status" value="1"/>
</dbReference>
<dbReference type="Pfam" id="PF00373">
    <property type="entry name" value="FERM_M"/>
    <property type="match status" value="1"/>
</dbReference>
<dbReference type="Pfam" id="PF18124">
    <property type="entry name" value="Kindlin_2_N"/>
    <property type="match status" value="1"/>
</dbReference>
<dbReference type="Pfam" id="PF00169">
    <property type="entry name" value="PH"/>
    <property type="match status" value="1"/>
</dbReference>
<dbReference type="SMART" id="SM00295">
    <property type="entry name" value="B41"/>
    <property type="match status" value="1"/>
</dbReference>
<dbReference type="SMART" id="SM00233">
    <property type="entry name" value="PH"/>
    <property type="match status" value="1"/>
</dbReference>
<dbReference type="SUPFAM" id="SSF50729">
    <property type="entry name" value="PH domain-like"/>
    <property type="match status" value="2"/>
</dbReference>
<dbReference type="SUPFAM" id="SSF47031">
    <property type="entry name" value="Second domain of FERM"/>
    <property type="match status" value="1"/>
</dbReference>
<dbReference type="PROSITE" id="PS50003">
    <property type="entry name" value="PH_DOMAIN"/>
    <property type="match status" value="1"/>
</dbReference>
<keyword id="KW-0130">Cell adhesion</keyword>
<keyword id="KW-0965">Cell junction</keyword>
<keyword id="KW-1003">Cell membrane</keyword>
<keyword id="KW-0966">Cell projection</keyword>
<keyword id="KW-0133">Cell shape</keyword>
<keyword id="KW-0963">Cytoplasm</keyword>
<keyword id="KW-0206">Cytoskeleton</keyword>
<keyword id="KW-0446">Lipid-binding</keyword>
<keyword id="KW-0472">Membrane</keyword>
<keyword id="KW-0539">Nucleus</keyword>
<keyword id="KW-1185">Reference proteome</keyword>
<keyword id="KW-0879">Wnt signaling pathway</keyword>
<comment type="function">
    <text evidence="1 4 5">Scaffolding protein that enhances integrin activation mediated by TLN1 and/or TLN2, but activates integrins only weakly by itself. Binds to membranes enriched in phosphoinositides. Enhances integrin-mediated cell adhesion onto the extracellular matrix and cell spreading; this requires both its ability to interact with integrins and with phospholipid membranes. Required for the assembly of focal adhesions. Participates in the connection between extracellular matrix adhesion sites and the actin cytoskeleton and also in the orchestration of actin assembly and cell shape modulation. Plays a role in the TGFB1 and integrin signaling pathways. Stabilizes active CTNNB1 and plays a role in the regulation of transcription mediated by CTNNB1 and TCF7L2/TCF4 and in Wnt signaling (By similarity). Required for normal embryonic development, including normal heart morphogenesis and normal angiogenesis.</text>
</comment>
<comment type="subcellular location">
    <subcellularLocation>
        <location evidence="1">Cytoplasm</location>
    </subcellularLocation>
    <subcellularLocation>
        <location evidence="1">Cytoplasm</location>
        <location evidence="1">Cell cortex</location>
    </subcellularLocation>
    <subcellularLocation>
        <location evidence="1">Cytoplasm</location>
        <location evidence="1">Cytoskeleton</location>
    </subcellularLocation>
    <subcellularLocation>
        <location evidence="1">Cytoplasm</location>
        <location evidence="1">Cytoskeleton</location>
        <location evidence="1">Stress fiber</location>
    </subcellularLocation>
    <subcellularLocation>
        <location evidence="1">Cell junction</location>
        <location evidence="1">Focal adhesion</location>
    </subcellularLocation>
    <subcellularLocation>
        <location evidence="1">Membrane</location>
        <topology evidence="1">Peripheral membrane protein</topology>
        <orientation evidence="1">Cytoplasmic side</orientation>
    </subcellularLocation>
    <subcellularLocation>
        <location evidence="1">Cell projection</location>
        <location evidence="1">Lamellipodium membrane</location>
        <topology evidence="1">Peripheral membrane protein</topology>
        <orientation evidence="1">Cytoplasmic side</orientation>
    </subcellularLocation>
    <subcellularLocation>
        <location evidence="1">Nucleus</location>
    </subcellularLocation>
    <subcellularLocation>
        <location evidence="1">Cytoplasm</location>
        <location evidence="1">Myofibril</location>
        <location evidence="1">Sarcomere</location>
        <location evidence="1">I band</location>
    </subcellularLocation>
    <subcellularLocation>
        <location evidence="1">Cell surface</location>
    </subcellularLocation>
    <text evidence="1">Colocalizes with actin stress fibers at cell-ECM focal adhesion sites. Colocalizes with integrins at lamellipodia at the leading edge of spreading cells. Binds to membranes that contain phosphatidylinositides (By similarity).</text>
</comment>
<comment type="domain">
    <text>The FERM domain is not correctly detected by PROSITE or Pfam techniques because it contains the insertion of a PH domain.</text>
</comment>
<comment type="domain">
    <text evidence="1">The PH domain binds phospholipids. Binds preferentially phosphatidylinositol-3,4,5-trisphosphate, and has lower affinity for phosphatidylinositol-4,5-bisphosphate (By similarity).</text>
</comment>
<comment type="domain">
    <text evidence="1">The N-terminal region displays a ubiquitin-type fold and mediates interaction with membranes containing negatively charged phosphatidylinositol phosphate via a surface enriched in positively charged residues.</text>
</comment>
<comment type="disruption phenotype">
    <text evidence="4 5">Morpholino knockdown results in severe defects in embryonic development. Nearly all embryos display pericardial edema. Most embryos display abnormal body shape and size, defects in heart morphogenesis, impaired mobility, and die at about 7 dpf. The embryonic cardiac muscle and skeletal muscle show defects in the association of the actin-myosin myofibers with the myocyte membrane (PubMed:18174465). Likewise, morpholino knockdown results in defective angiogenesis, with abnormally short and thin vessels and very little blood flow (PubMed:21378273).</text>
</comment>
<comment type="similarity">
    <text evidence="6">Belongs to the kindlin family.</text>
</comment>
<proteinExistence type="evidence at transcript level"/>
<reference key="1">
    <citation type="journal article" date="2013" name="Nature">
        <title>The zebrafish reference genome sequence and its relationship to the human genome.</title>
        <authorList>
            <person name="Howe K."/>
            <person name="Clark M.D."/>
            <person name="Torroja C.F."/>
            <person name="Torrance J."/>
            <person name="Berthelot C."/>
            <person name="Muffato M."/>
            <person name="Collins J.E."/>
            <person name="Humphray S."/>
            <person name="McLaren K."/>
            <person name="Matthews L."/>
            <person name="McLaren S."/>
            <person name="Sealy I."/>
            <person name="Caccamo M."/>
            <person name="Churcher C."/>
            <person name="Scott C."/>
            <person name="Barrett J.C."/>
            <person name="Koch R."/>
            <person name="Rauch G.J."/>
            <person name="White S."/>
            <person name="Chow W."/>
            <person name="Kilian B."/>
            <person name="Quintais L.T."/>
            <person name="Guerra-Assuncao J.A."/>
            <person name="Zhou Y."/>
            <person name="Gu Y."/>
            <person name="Yen J."/>
            <person name="Vogel J.H."/>
            <person name="Eyre T."/>
            <person name="Redmond S."/>
            <person name="Banerjee R."/>
            <person name="Chi J."/>
            <person name="Fu B."/>
            <person name="Langley E."/>
            <person name="Maguire S.F."/>
            <person name="Laird G.K."/>
            <person name="Lloyd D."/>
            <person name="Kenyon E."/>
            <person name="Donaldson S."/>
            <person name="Sehra H."/>
            <person name="Almeida-King J."/>
            <person name="Loveland J."/>
            <person name="Trevanion S."/>
            <person name="Jones M."/>
            <person name="Quail M."/>
            <person name="Willey D."/>
            <person name="Hunt A."/>
            <person name="Burton J."/>
            <person name="Sims S."/>
            <person name="McLay K."/>
            <person name="Plumb B."/>
            <person name="Davis J."/>
            <person name="Clee C."/>
            <person name="Oliver K."/>
            <person name="Clark R."/>
            <person name="Riddle C."/>
            <person name="Elliot D."/>
            <person name="Threadgold G."/>
            <person name="Harden G."/>
            <person name="Ware D."/>
            <person name="Begum S."/>
            <person name="Mortimore B."/>
            <person name="Kerry G."/>
            <person name="Heath P."/>
            <person name="Phillimore B."/>
            <person name="Tracey A."/>
            <person name="Corby N."/>
            <person name="Dunn M."/>
            <person name="Johnson C."/>
            <person name="Wood J."/>
            <person name="Clark S."/>
            <person name="Pelan S."/>
            <person name="Griffiths G."/>
            <person name="Smith M."/>
            <person name="Glithero R."/>
            <person name="Howden P."/>
            <person name="Barker N."/>
            <person name="Lloyd C."/>
            <person name="Stevens C."/>
            <person name="Harley J."/>
            <person name="Holt K."/>
            <person name="Panagiotidis G."/>
            <person name="Lovell J."/>
            <person name="Beasley H."/>
            <person name="Henderson C."/>
            <person name="Gordon D."/>
            <person name="Auger K."/>
            <person name="Wright D."/>
            <person name="Collins J."/>
            <person name="Raisen C."/>
            <person name="Dyer L."/>
            <person name="Leung K."/>
            <person name="Robertson L."/>
            <person name="Ambridge K."/>
            <person name="Leongamornlert D."/>
            <person name="McGuire S."/>
            <person name="Gilderthorp R."/>
            <person name="Griffiths C."/>
            <person name="Manthravadi D."/>
            <person name="Nichol S."/>
            <person name="Barker G."/>
            <person name="Whitehead S."/>
            <person name="Kay M."/>
            <person name="Brown J."/>
            <person name="Murnane C."/>
            <person name="Gray E."/>
            <person name="Humphries M."/>
            <person name="Sycamore N."/>
            <person name="Barker D."/>
            <person name="Saunders D."/>
            <person name="Wallis J."/>
            <person name="Babbage A."/>
            <person name="Hammond S."/>
            <person name="Mashreghi-Mohammadi M."/>
            <person name="Barr L."/>
            <person name="Martin S."/>
            <person name="Wray P."/>
            <person name="Ellington A."/>
            <person name="Matthews N."/>
            <person name="Ellwood M."/>
            <person name="Woodmansey R."/>
            <person name="Clark G."/>
            <person name="Cooper J."/>
            <person name="Tromans A."/>
            <person name="Grafham D."/>
            <person name="Skuce C."/>
            <person name="Pandian R."/>
            <person name="Andrews R."/>
            <person name="Harrison E."/>
            <person name="Kimberley A."/>
            <person name="Garnett J."/>
            <person name="Fosker N."/>
            <person name="Hall R."/>
            <person name="Garner P."/>
            <person name="Kelly D."/>
            <person name="Bird C."/>
            <person name="Palmer S."/>
            <person name="Gehring I."/>
            <person name="Berger A."/>
            <person name="Dooley C.M."/>
            <person name="Ersan-Urun Z."/>
            <person name="Eser C."/>
            <person name="Geiger H."/>
            <person name="Geisler M."/>
            <person name="Karotki L."/>
            <person name="Kirn A."/>
            <person name="Konantz J."/>
            <person name="Konantz M."/>
            <person name="Oberlander M."/>
            <person name="Rudolph-Geiger S."/>
            <person name="Teucke M."/>
            <person name="Lanz C."/>
            <person name="Raddatz G."/>
            <person name="Osoegawa K."/>
            <person name="Zhu B."/>
            <person name="Rapp A."/>
            <person name="Widaa S."/>
            <person name="Langford C."/>
            <person name="Yang F."/>
            <person name="Schuster S.C."/>
            <person name="Carter N.P."/>
            <person name="Harrow J."/>
            <person name="Ning Z."/>
            <person name="Herrero J."/>
            <person name="Searle S.M."/>
            <person name="Enright A."/>
            <person name="Geisler R."/>
            <person name="Plasterk R.H."/>
            <person name="Lee C."/>
            <person name="Westerfield M."/>
            <person name="de Jong P.J."/>
            <person name="Zon L.I."/>
            <person name="Postlethwait J.H."/>
            <person name="Nusslein-Volhard C."/>
            <person name="Hubbard T.J."/>
            <person name="Roest Crollius H."/>
            <person name="Rogers J."/>
            <person name="Stemple D.L."/>
        </authorList>
    </citation>
    <scope>NUCLEOTIDE SEQUENCE [LARGE SCALE GENOMIC DNA]</scope>
    <source>
        <strain>Tuebingen</strain>
    </source>
</reference>
<reference key="2">
    <citation type="submission" date="2005-03" db="EMBL/GenBank/DDBJ databases">
        <authorList>
            <consortium name="NIH - Zebrafish Gene Collection (ZGC) project"/>
        </authorList>
    </citation>
    <scope>NUCLEOTIDE SEQUENCE [LARGE SCALE MRNA] OF 82-684</scope>
    <source>
        <tissue>Embryo</tissue>
    </source>
</reference>
<reference key="3">
    <citation type="journal article" date="2008" name="Circ. Res.">
        <title>Kindlin-2 is an essential component of intercalated discs and is required for vertebrate cardiac structure and function.</title>
        <authorList>
            <person name="Dowling J.J."/>
            <person name="Gibbs E."/>
            <person name="Russell M."/>
            <person name="Goldman D."/>
            <person name="Minarcik J."/>
            <person name="Golden J.A."/>
            <person name="Feldman E.L."/>
        </authorList>
    </citation>
    <scope>DISRUPTION PHENOTYPE</scope>
    <scope>FUNCTION</scope>
</reference>
<reference key="4">
    <citation type="journal article" date="2011" name="Blood">
        <title>The integrin coactivator kindlin-2 plays a critical role in angiogenesis in mice and zebrafish.</title>
        <authorList>
            <person name="Pluskota E."/>
            <person name="Dowling J.J."/>
            <person name="Gordon N."/>
            <person name="Golden J.A."/>
            <person name="Szpak D."/>
            <person name="West X.Z."/>
            <person name="Nestor C."/>
            <person name="Ma Y.Q."/>
            <person name="Bialkowska K."/>
            <person name="Byzova T."/>
            <person name="Plow E.F."/>
        </authorList>
    </citation>
    <scope>DISRUPTION PHENOTYPE</scope>
    <scope>FUNCTION</scope>
</reference>